<reference key="1">
    <citation type="journal article" date="2008" name="BMC Genomics">
        <title>Acidithiobacillus ferrooxidans metabolism: from genome sequence to industrial applications.</title>
        <authorList>
            <person name="Valdes J."/>
            <person name="Pedroso I."/>
            <person name="Quatrini R."/>
            <person name="Dodson R.J."/>
            <person name="Tettelin H."/>
            <person name="Blake R. II"/>
            <person name="Eisen J.A."/>
            <person name="Holmes D.S."/>
        </authorList>
    </citation>
    <scope>NUCLEOTIDE SEQUENCE [LARGE SCALE GENOMIC DNA]</scope>
    <source>
        <strain>ATCC 23270 / DSM 14882 / CIP 104768 / NCIMB 8455</strain>
    </source>
</reference>
<dbReference type="EC" id="7.1.1.-" evidence="1"/>
<dbReference type="EMBL" id="CP001219">
    <property type="protein sequence ID" value="ACK78904.1"/>
    <property type="molecule type" value="Genomic_DNA"/>
</dbReference>
<dbReference type="RefSeq" id="WP_012607483.1">
    <property type="nucleotide sequence ID" value="NC_011761.1"/>
</dbReference>
<dbReference type="SMR" id="B7J7T5"/>
<dbReference type="STRING" id="243159.AFE_2620"/>
<dbReference type="PaxDb" id="243159-AFE_2620"/>
<dbReference type="GeneID" id="65281669"/>
<dbReference type="KEGG" id="afr:AFE_2620"/>
<dbReference type="eggNOG" id="COG0713">
    <property type="taxonomic scope" value="Bacteria"/>
</dbReference>
<dbReference type="HOGENOM" id="CLU_144724_2_0_6"/>
<dbReference type="Proteomes" id="UP000001362">
    <property type="component" value="Chromosome"/>
</dbReference>
<dbReference type="GO" id="GO:0030964">
    <property type="term" value="C:NADH dehydrogenase complex"/>
    <property type="evidence" value="ECO:0007669"/>
    <property type="project" value="TreeGrafter"/>
</dbReference>
<dbReference type="GO" id="GO:0005886">
    <property type="term" value="C:plasma membrane"/>
    <property type="evidence" value="ECO:0007669"/>
    <property type="project" value="UniProtKB-SubCell"/>
</dbReference>
<dbReference type="GO" id="GO:0050136">
    <property type="term" value="F:NADH:ubiquinone reductase (non-electrogenic) activity"/>
    <property type="evidence" value="ECO:0007669"/>
    <property type="project" value="UniProtKB-UniRule"/>
</dbReference>
<dbReference type="GO" id="GO:0048038">
    <property type="term" value="F:quinone binding"/>
    <property type="evidence" value="ECO:0007669"/>
    <property type="project" value="UniProtKB-KW"/>
</dbReference>
<dbReference type="GO" id="GO:0042773">
    <property type="term" value="P:ATP synthesis coupled electron transport"/>
    <property type="evidence" value="ECO:0007669"/>
    <property type="project" value="InterPro"/>
</dbReference>
<dbReference type="FunFam" id="1.10.287.3510:FF:000001">
    <property type="entry name" value="NADH-quinone oxidoreductase subunit K"/>
    <property type="match status" value="1"/>
</dbReference>
<dbReference type="Gene3D" id="1.10.287.3510">
    <property type="match status" value="1"/>
</dbReference>
<dbReference type="HAMAP" id="MF_01456">
    <property type="entry name" value="NDH1_NuoK"/>
    <property type="match status" value="1"/>
</dbReference>
<dbReference type="InterPro" id="IPR001133">
    <property type="entry name" value="NADH_UbQ_OxRdtase_chain4L/K"/>
</dbReference>
<dbReference type="InterPro" id="IPR039428">
    <property type="entry name" value="NUOK/Mnh_C1-like"/>
</dbReference>
<dbReference type="NCBIfam" id="NF004320">
    <property type="entry name" value="PRK05715.1-2"/>
    <property type="match status" value="1"/>
</dbReference>
<dbReference type="NCBIfam" id="NF004321">
    <property type="entry name" value="PRK05715.1-3"/>
    <property type="match status" value="1"/>
</dbReference>
<dbReference type="NCBIfam" id="NF004323">
    <property type="entry name" value="PRK05715.1-5"/>
    <property type="match status" value="1"/>
</dbReference>
<dbReference type="PANTHER" id="PTHR11434:SF21">
    <property type="entry name" value="NADH DEHYDROGENASE SUBUNIT 4L-RELATED"/>
    <property type="match status" value="1"/>
</dbReference>
<dbReference type="PANTHER" id="PTHR11434">
    <property type="entry name" value="NADH-UBIQUINONE OXIDOREDUCTASE SUBUNIT ND4L"/>
    <property type="match status" value="1"/>
</dbReference>
<dbReference type="Pfam" id="PF00420">
    <property type="entry name" value="Oxidored_q2"/>
    <property type="match status" value="1"/>
</dbReference>
<sequence length="105" mass="11379">MNAGQPTLAAYLILGAMLFSIGVVGVFLNRKNVIILLMAIELLLLAVNINLVAFSRYLGNLDGQVFVFFILTVAAAEAAIGLAILVAYFRNRHSINVDDIDELRG</sequence>
<name>NUOK_ACIF2</name>
<keyword id="KW-0997">Cell inner membrane</keyword>
<keyword id="KW-1003">Cell membrane</keyword>
<keyword id="KW-0472">Membrane</keyword>
<keyword id="KW-0520">NAD</keyword>
<keyword id="KW-0874">Quinone</keyword>
<keyword id="KW-1185">Reference proteome</keyword>
<keyword id="KW-1278">Translocase</keyword>
<keyword id="KW-0812">Transmembrane</keyword>
<keyword id="KW-1133">Transmembrane helix</keyword>
<keyword id="KW-0813">Transport</keyword>
<keyword id="KW-0830">Ubiquinone</keyword>
<proteinExistence type="inferred from homology"/>
<feature type="chain" id="PRO_0000389906" description="NADH-quinone oxidoreductase subunit K">
    <location>
        <begin position="1"/>
        <end position="105"/>
    </location>
</feature>
<feature type="transmembrane region" description="Helical" evidence="1">
    <location>
        <begin position="8"/>
        <end position="28"/>
    </location>
</feature>
<feature type="transmembrane region" description="Helical" evidence="1">
    <location>
        <begin position="34"/>
        <end position="54"/>
    </location>
</feature>
<feature type="transmembrane region" description="Helical" evidence="1">
    <location>
        <begin position="65"/>
        <end position="85"/>
    </location>
</feature>
<evidence type="ECO:0000255" key="1">
    <source>
        <dbReference type="HAMAP-Rule" id="MF_01456"/>
    </source>
</evidence>
<comment type="function">
    <text evidence="1">NDH-1 shuttles electrons from NADH, via FMN and iron-sulfur (Fe-S) centers, to quinones in the respiratory chain. The immediate electron acceptor for the enzyme in this species is believed to be ubiquinone. Couples the redox reaction to proton translocation (for every two electrons transferred, four hydrogen ions are translocated across the cytoplasmic membrane), and thus conserves the redox energy in a proton gradient.</text>
</comment>
<comment type="catalytic activity">
    <reaction evidence="1">
        <text>a quinone + NADH + 5 H(+)(in) = a quinol + NAD(+) + 4 H(+)(out)</text>
        <dbReference type="Rhea" id="RHEA:57888"/>
        <dbReference type="ChEBI" id="CHEBI:15378"/>
        <dbReference type="ChEBI" id="CHEBI:24646"/>
        <dbReference type="ChEBI" id="CHEBI:57540"/>
        <dbReference type="ChEBI" id="CHEBI:57945"/>
        <dbReference type="ChEBI" id="CHEBI:132124"/>
    </reaction>
</comment>
<comment type="subunit">
    <text evidence="1">NDH-1 is composed of 14 different subunits. Subunits NuoA, H, J, K, L, M, N constitute the membrane sector of the complex.</text>
</comment>
<comment type="subcellular location">
    <subcellularLocation>
        <location evidence="1">Cell inner membrane</location>
        <topology evidence="1">Multi-pass membrane protein</topology>
    </subcellularLocation>
</comment>
<comment type="similarity">
    <text evidence="1">Belongs to the complex I subunit 4L family.</text>
</comment>
<accession>B7J7T5</accession>
<protein>
    <recommendedName>
        <fullName evidence="1">NADH-quinone oxidoreductase subunit K</fullName>
        <ecNumber evidence="1">7.1.1.-</ecNumber>
    </recommendedName>
    <alternativeName>
        <fullName evidence="1">NADH dehydrogenase I subunit K</fullName>
    </alternativeName>
    <alternativeName>
        <fullName evidence="1">NDH-1 subunit K</fullName>
    </alternativeName>
</protein>
<organism>
    <name type="scientific">Acidithiobacillus ferrooxidans (strain ATCC 23270 / DSM 14882 / CIP 104768 / NCIMB 8455)</name>
    <name type="common">Ferrobacillus ferrooxidans (strain ATCC 23270)</name>
    <dbReference type="NCBI Taxonomy" id="243159"/>
    <lineage>
        <taxon>Bacteria</taxon>
        <taxon>Pseudomonadati</taxon>
        <taxon>Pseudomonadota</taxon>
        <taxon>Acidithiobacillia</taxon>
        <taxon>Acidithiobacillales</taxon>
        <taxon>Acidithiobacillaceae</taxon>
        <taxon>Acidithiobacillus</taxon>
    </lineage>
</organism>
<gene>
    <name evidence="1" type="primary">nuoK</name>
    <name type="ordered locus">AFE_2620</name>
</gene>